<sequence length="422" mass="46386">MSKKITSIRGMNDILPEQTGLWQWLEAKVGAVLASYGYQEIRMPIVEQTDLFKRSIGEVTDIVEKEMYTFDDRNGDSLTLRPEGTASCVRACEQHGLLYNQTQRLWYAGPMFRHERPQAGRYRQFHQIGVETFGMTGPDIDAEVILLTARLWKALGLEDKVVLELNSLGDSADRARYRDALVDYLKAHFDDLDGDSQKRLERSPLRVLDSKDTGTREVLKGAPQLADYLNDEAVAHFEGLKALLDASGIAYKVNPYLVRGLDYYGKTVFEWVTDALGAQGTVCAGGRYDGLVEQLGGKPTPAVGFAMGIERLILLIEQERPELSAPVDVYVMAMGDVLAPTMALSEHLRDALPGRAIQLHCGGGSFKSQMKKADRSGAAVGLIMGEDELASGVVTVKPLRGQGEQVQVAQGDVANAVTSFLE</sequence>
<evidence type="ECO:0000255" key="1">
    <source>
        <dbReference type="HAMAP-Rule" id="MF_00127"/>
    </source>
</evidence>
<proteinExistence type="inferred from homology"/>
<comment type="catalytic activity">
    <reaction evidence="1">
        <text>tRNA(His) + L-histidine + ATP = L-histidyl-tRNA(His) + AMP + diphosphate + H(+)</text>
        <dbReference type="Rhea" id="RHEA:17313"/>
        <dbReference type="Rhea" id="RHEA-COMP:9665"/>
        <dbReference type="Rhea" id="RHEA-COMP:9689"/>
        <dbReference type="ChEBI" id="CHEBI:15378"/>
        <dbReference type="ChEBI" id="CHEBI:30616"/>
        <dbReference type="ChEBI" id="CHEBI:33019"/>
        <dbReference type="ChEBI" id="CHEBI:57595"/>
        <dbReference type="ChEBI" id="CHEBI:78442"/>
        <dbReference type="ChEBI" id="CHEBI:78527"/>
        <dbReference type="ChEBI" id="CHEBI:456215"/>
        <dbReference type="EC" id="6.1.1.21"/>
    </reaction>
</comment>
<comment type="subunit">
    <text evidence="1">Homodimer.</text>
</comment>
<comment type="subcellular location">
    <subcellularLocation>
        <location evidence="1">Cytoplasm</location>
    </subcellularLocation>
</comment>
<comment type="similarity">
    <text evidence="1">Belongs to the class-II aminoacyl-tRNA synthetase family.</text>
</comment>
<gene>
    <name evidence="1" type="primary">hisS</name>
    <name type="ordered locus">ABO_1859</name>
</gene>
<protein>
    <recommendedName>
        <fullName evidence="1">Histidine--tRNA ligase</fullName>
        <ecNumber evidence="1">6.1.1.21</ecNumber>
    </recommendedName>
    <alternativeName>
        <fullName evidence="1">Histidyl-tRNA synthetase</fullName>
        <shortName evidence="1">HisRS</shortName>
    </alternativeName>
</protein>
<feature type="chain" id="PRO_1000016307" description="Histidine--tRNA ligase">
    <location>
        <begin position="1"/>
        <end position="422"/>
    </location>
</feature>
<keyword id="KW-0030">Aminoacyl-tRNA synthetase</keyword>
<keyword id="KW-0067">ATP-binding</keyword>
<keyword id="KW-0963">Cytoplasm</keyword>
<keyword id="KW-0436">Ligase</keyword>
<keyword id="KW-0547">Nucleotide-binding</keyword>
<keyword id="KW-0648">Protein biosynthesis</keyword>
<keyword id="KW-1185">Reference proteome</keyword>
<name>SYH_ALCBS</name>
<organism>
    <name type="scientific">Alcanivorax borkumensis (strain ATCC 700651 / DSM 11573 / NCIMB 13689 / SK2)</name>
    <dbReference type="NCBI Taxonomy" id="393595"/>
    <lineage>
        <taxon>Bacteria</taxon>
        <taxon>Pseudomonadati</taxon>
        <taxon>Pseudomonadota</taxon>
        <taxon>Gammaproteobacteria</taxon>
        <taxon>Oceanospirillales</taxon>
        <taxon>Alcanivoracaceae</taxon>
        <taxon>Alcanivorax</taxon>
    </lineage>
</organism>
<accession>Q0VNE1</accession>
<reference key="1">
    <citation type="journal article" date="2006" name="Nat. Biotechnol.">
        <title>Genome sequence of the ubiquitous hydrocarbon-degrading marine bacterium Alcanivorax borkumensis.</title>
        <authorList>
            <person name="Schneiker S."/>
            <person name="Martins dos Santos V.A.P."/>
            <person name="Bartels D."/>
            <person name="Bekel T."/>
            <person name="Brecht M."/>
            <person name="Buhrmester J."/>
            <person name="Chernikova T.N."/>
            <person name="Denaro R."/>
            <person name="Ferrer M."/>
            <person name="Gertler C."/>
            <person name="Goesmann A."/>
            <person name="Golyshina O.V."/>
            <person name="Kaminski F."/>
            <person name="Khachane A.N."/>
            <person name="Lang S."/>
            <person name="Linke B."/>
            <person name="McHardy A.C."/>
            <person name="Meyer F."/>
            <person name="Nechitaylo T."/>
            <person name="Puehler A."/>
            <person name="Regenhardt D."/>
            <person name="Rupp O."/>
            <person name="Sabirova J.S."/>
            <person name="Selbitschka W."/>
            <person name="Yakimov M.M."/>
            <person name="Timmis K.N."/>
            <person name="Vorhoelter F.-J."/>
            <person name="Weidner S."/>
            <person name="Kaiser O."/>
            <person name="Golyshin P.N."/>
        </authorList>
    </citation>
    <scope>NUCLEOTIDE SEQUENCE [LARGE SCALE GENOMIC DNA]</scope>
    <source>
        <strain>ATCC 700651 / DSM 11573 / NCIMB 13689 / SK2</strain>
    </source>
</reference>
<dbReference type="EC" id="6.1.1.21" evidence="1"/>
<dbReference type="EMBL" id="AM286690">
    <property type="protein sequence ID" value="CAL17307.1"/>
    <property type="molecule type" value="Genomic_DNA"/>
</dbReference>
<dbReference type="RefSeq" id="WP_011589138.1">
    <property type="nucleotide sequence ID" value="NC_008260.1"/>
</dbReference>
<dbReference type="SMR" id="Q0VNE1"/>
<dbReference type="STRING" id="393595.ABO_1859"/>
<dbReference type="KEGG" id="abo:ABO_1859"/>
<dbReference type="eggNOG" id="COG0124">
    <property type="taxonomic scope" value="Bacteria"/>
</dbReference>
<dbReference type="HOGENOM" id="CLU_025113_1_1_6"/>
<dbReference type="OrthoDB" id="9800814at2"/>
<dbReference type="Proteomes" id="UP000008871">
    <property type="component" value="Chromosome"/>
</dbReference>
<dbReference type="GO" id="GO:0005737">
    <property type="term" value="C:cytoplasm"/>
    <property type="evidence" value="ECO:0007669"/>
    <property type="project" value="UniProtKB-SubCell"/>
</dbReference>
<dbReference type="GO" id="GO:0005524">
    <property type="term" value="F:ATP binding"/>
    <property type="evidence" value="ECO:0007669"/>
    <property type="project" value="UniProtKB-UniRule"/>
</dbReference>
<dbReference type="GO" id="GO:0004821">
    <property type="term" value="F:histidine-tRNA ligase activity"/>
    <property type="evidence" value="ECO:0007669"/>
    <property type="project" value="UniProtKB-UniRule"/>
</dbReference>
<dbReference type="GO" id="GO:0006427">
    <property type="term" value="P:histidyl-tRNA aminoacylation"/>
    <property type="evidence" value="ECO:0007669"/>
    <property type="project" value="UniProtKB-UniRule"/>
</dbReference>
<dbReference type="CDD" id="cd00773">
    <property type="entry name" value="HisRS-like_core"/>
    <property type="match status" value="1"/>
</dbReference>
<dbReference type="CDD" id="cd00859">
    <property type="entry name" value="HisRS_anticodon"/>
    <property type="match status" value="1"/>
</dbReference>
<dbReference type="FunFam" id="3.30.930.10:FF:000005">
    <property type="entry name" value="Histidine--tRNA ligase"/>
    <property type="match status" value="1"/>
</dbReference>
<dbReference type="Gene3D" id="3.40.50.800">
    <property type="entry name" value="Anticodon-binding domain"/>
    <property type="match status" value="1"/>
</dbReference>
<dbReference type="Gene3D" id="3.30.930.10">
    <property type="entry name" value="Bira Bifunctional Protein, Domain 2"/>
    <property type="match status" value="1"/>
</dbReference>
<dbReference type="HAMAP" id="MF_00127">
    <property type="entry name" value="His_tRNA_synth"/>
    <property type="match status" value="1"/>
</dbReference>
<dbReference type="InterPro" id="IPR006195">
    <property type="entry name" value="aa-tRNA-synth_II"/>
</dbReference>
<dbReference type="InterPro" id="IPR045864">
    <property type="entry name" value="aa-tRNA-synth_II/BPL/LPL"/>
</dbReference>
<dbReference type="InterPro" id="IPR004154">
    <property type="entry name" value="Anticodon-bd"/>
</dbReference>
<dbReference type="InterPro" id="IPR036621">
    <property type="entry name" value="Anticodon-bd_dom_sf"/>
</dbReference>
<dbReference type="InterPro" id="IPR015807">
    <property type="entry name" value="His-tRNA-ligase"/>
</dbReference>
<dbReference type="InterPro" id="IPR041715">
    <property type="entry name" value="HisRS-like_core"/>
</dbReference>
<dbReference type="InterPro" id="IPR004516">
    <property type="entry name" value="HisRS/HisZ"/>
</dbReference>
<dbReference type="InterPro" id="IPR033656">
    <property type="entry name" value="HisRS_anticodon"/>
</dbReference>
<dbReference type="NCBIfam" id="TIGR00442">
    <property type="entry name" value="hisS"/>
    <property type="match status" value="1"/>
</dbReference>
<dbReference type="PANTHER" id="PTHR43707:SF1">
    <property type="entry name" value="HISTIDINE--TRNA LIGASE, MITOCHONDRIAL-RELATED"/>
    <property type="match status" value="1"/>
</dbReference>
<dbReference type="PANTHER" id="PTHR43707">
    <property type="entry name" value="HISTIDYL-TRNA SYNTHETASE"/>
    <property type="match status" value="1"/>
</dbReference>
<dbReference type="Pfam" id="PF03129">
    <property type="entry name" value="HGTP_anticodon"/>
    <property type="match status" value="1"/>
</dbReference>
<dbReference type="Pfam" id="PF13393">
    <property type="entry name" value="tRNA-synt_His"/>
    <property type="match status" value="1"/>
</dbReference>
<dbReference type="PIRSF" id="PIRSF001549">
    <property type="entry name" value="His-tRNA_synth"/>
    <property type="match status" value="1"/>
</dbReference>
<dbReference type="SUPFAM" id="SSF52954">
    <property type="entry name" value="Class II aaRS ABD-related"/>
    <property type="match status" value="1"/>
</dbReference>
<dbReference type="SUPFAM" id="SSF55681">
    <property type="entry name" value="Class II aaRS and biotin synthetases"/>
    <property type="match status" value="1"/>
</dbReference>
<dbReference type="PROSITE" id="PS50862">
    <property type="entry name" value="AA_TRNA_LIGASE_II"/>
    <property type="match status" value="1"/>
</dbReference>